<gene>
    <name evidence="1" type="primary">Jaml</name>
    <name type="synonym">Amica1</name>
    <name type="synonym">Gm638</name>
</gene>
<reference key="1">
    <citation type="submission" date="2002-03" db="EMBL/GenBank/DDBJ databases">
        <title>mCrea7, mouse ortholog of human dendritic cell specific protein Crea7.</title>
        <authorList>
            <person name="Ahn J.H."/>
            <person name="Jung H.R."/>
            <person name="Lee B.-H."/>
            <person name="Jeon C.J."/>
            <person name="Bae Y.-S."/>
        </authorList>
    </citation>
    <scope>NUCLEOTIDE SEQUENCE [MRNA]</scope>
    <source>
        <strain>BALB/cJ</strain>
        <tissue>Thymus</tissue>
    </source>
</reference>
<reference key="2">
    <citation type="journal article" date="2009" name="PLoS Biol.">
        <title>Lineage-specific biology revealed by a finished genome assembly of the mouse.</title>
        <authorList>
            <person name="Church D.M."/>
            <person name="Goodstadt L."/>
            <person name="Hillier L.W."/>
            <person name="Zody M.C."/>
            <person name="Goldstein S."/>
            <person name="She X."/>
            <person name="Bult C.J."/>
            <person name="Agarwala R."/>
            <person name="Cherry J.L."/>
            <person name="DiCuccio M."/>
            <person name="Hlavina W."/>
            <person name="Kapustin Y."/>
            <person name="Meric P."/>
            <person name="Maglott D."/>
            <person name="Birtle Z."/>
            <person name="Marques A.C."/>
            <person name="Graves T."/>
            <person name="Zhou S."/>
            <person name="Teague B."/>
            <person name="Potamousis K."/>
            <person name="Churas C."/>
            <person name="Place M."/>
            <person name="Herschleb J."/>
            <person name="Runnheim R."/>
            <person name="Forrest D."/>
            <person name="Amos-Landgraf J."/>
            <person name="Schwartz D.C."/>
            <person name="Cheng Z."/>
            <person name="Lindblad-Toh K."/>
            <person name="Eichler E.E."/>
            <person name="Ponting C.P."/>
        </authorList>
    </citation>
    <scope>NUCLEOTIDE SEQUENCE [LARGE SCALE GENOMIC DNA]</scope>
    <source>
        <strain>C57BL/6J</strain>
    </source>
</reference>
<reference key="3">
    <citation type="journal article" date="2004" name="Genome Res.">
        <title>The status, quality, and expansion of the NIH full-length cDNA project: the Mammalian Gene Collection (MGC).</title>
        <authorList>
            <consortium name="The MGC Project Team"/>
        </authorList>
    </citation>
    <scope>NUCLEOTIDE SEQUENCE [LARGE SCALE MRNA]</scope>
    <source>
        <strain>B5/EGFP</strain>
        <tissue>Trophoblast</tissue>
    </source>
</reference>
<reference key="4">
    <citation type="journal article" date="2010" name="Science">
        <title>The junctional adhesion molecule JAML is a costimulatory receptor for epithelial gammadelta T cell activation.</title>
        <authorList>
            <person name="Witherden D.A."/>
            <person name="Verdino P."/>
            <person name="Rieder S.E."/>
            <person name="Garijo O."/>
            <person name="Mills R.E."/>
            <person name="Teyton L."/>
            <person name="Fischer W.H."/>
            <person name="Wilson I.A."/>
            <person name="Havran W.L."/>
        </authorList>
    </citation>
    <scope>FUNCTION IN GAMMA-DELTA T-CELL ACTIVATION</scope>
    <scope>INTERACTION WITH CXADR</scope>
    <scope>SUBCELLULAR LOCATION</scope>
    <scope>TISSUE SPECIFICITY</scope>
</reference>
<reference key="5">
    <citation type="journal article" date="2010" name="Science">
        <title>The molecular interaction of CAR and JAML recruits the central cell signal transducer PI3K.</title>
        <authorList>
            <person name="Verdino P."/>
            <person name="Witherden D.A."/>
            <person name="Havran W.L."/>
            <person name="Wilson I.A."/>
        </authorList>
    </citation>
    <scope>X-RAY CRYSTALLOGRAPHY (2.19 ANGSTROMS) OF 21-280 ALONE AND IN COMPLEX WITH CXADR</scope>
    <scope>DOMAIN</scope>
    <scope>HOMODIMERIZATION</scope>
    <scope>INTERACTION WITH PI3 KINASE</scope>
    <scope>GLYCOSYLATION AT ASN-79; ASN-89 AND ASN-125</scope>
    <scope>DISULFIDE BONDS</scope>
    <scope>MUTAGENESIS OF ASP-59; TYR-72; PHE-75; TYR-77; ARG-122; TYR-334; TYR-355 AND 360-PRO--PRO-366</scope>
</reference>
<organism>
    <name type="scientific">Mus musculus</name>
    <name type="common">Mouse</name>
    <dbReference type="NCBI Taxonomy" id="10090"/>
    <lineage>
        <taxon>Eukaryota</taxon>
        <taxon>Metazoa</taxon>
        <taxon>Chordata</taxon>
        <taxon>Craniata</taxon>
        <taxon>Vertebrata</taxon>
        <taxon>Euteleostomi</taxon>
        <taxon>Mammalia</taxon>
        <taxon>Eutheria</taxon>
        <taxon>Euarchontoglires</taxon>
        <taxon>Glires</taxon>
        <taxon>Rodentia</taxon>
        <taxon>Myomorpha</taxon>
        <taxon>Muroidea</taxon>
        <taxon>Muridae</taxon>
        <taxon>Murinae</taxon>
        <taxon>Mus</taxon>
        <taxon>Mus</taxon>
    </lineage>
</organism>
<accession>Q80UL9</accession>
<accession>E9QNV7</accession>
<accession>Q5DTC4</accession>
<feature type="signal peptide" evidence="2">
    <location>
        <begin position="1"/>
        <end position="20"/>
    </location>
</feature>
<feature type="chain" id="PRO_0000015075" description="Junctional adhesion molecule-like">
    <location>
        <begin position="21"/>
        <end position="379"/>
    </location>
</feature>
<feature type="topological domain" description="Extracellular" evidence="2">
    <location>
        <begin position="21"/>
        <end position="281"/>
    </location>
</feature>
<feature type="transmembrane region" description="Helical" evidence="2">
    <location>
        <begin position="282"/>
        <end position="302"/>
    </location>
</feature>
<feature type="topological domain" description="Cytoplasmic" evidence="2">
    <location>
        <begin position="303"/>
        <end position="379"/>
    </location>
</feature>
<feature type="domain" description="Ig-like V-type 1">
    <location>
        <begin position="24"/>
        <end position="135"/>
    </location>
</feature>
<feature type="domain" description="Ig-like V-type 2">
    <location>
        <begin position="140"/>
        <end position="250"/>
    </location>
</feature>
<feature type="modified residue" description="Phosphotyrosine" evidence="6">
    <location>
        <position position="355"/>
    </location>
</feature>
<feature type="glycosylation site" description="N-linked (GlcNAc...) asparagine" evidence="5">
    <location>
        <position position="79"/>
    </location>
</feature>
<feature type="glycosylation site" description="N-linked (GlcNAc...) asparagine" evidence="5">
    <location>
        <position position="89"/>
    </location>
</feature>
<feature type="glycosylation site" description="N-linked (GlcNAc...) asparagine" evidence="5">
    <location>
        <position position="125"/>
    </location>
</feature>
<feature type="disulfide bond" evidence="3 5">
    <location>
        <begin position="45"/>
        <end position="119"/>
    </location>
</feature>
<feature type="disulfide bond" evidence="3 5">
    <location>
        <begin position="158"/>
        <end position="236"/>
    </location>
</feature>
<feature type="mutagenesis site" description="Loss of interaction with CXADR." evidence="5">
    <original>D</original>
    <variation>A</variation>
    <variation>K</variation>
    <variation>N</variation>
    <location>
        <position position="59"/>
    </location>
</feature>
<feature type="mutagenesis site" description="Loss of interaction with CXADR." evidence="5">
    <original>Y</original>
    <variation>A</variation>
    <location>
        <position position="72"/>
    </location>
</feature>
<feature type="mutagenesis site" description="Loss of interaction with CXADR." evidence="5">
    <original>F</original>
    <variation>A</variation>
    <variation>W</variation>
    <location>
        <position position="75"/>
    </location>
</feature>
<feature type="mutagenesis site" description="Loss of interaction with CXADR." evidence="5">
    <original>Y</original>
    <variation>A</variation>
    <variation>F</variation>
    <location>
        <position position="77"/>
    </location>
</feature>
<feature type="mutagenesis site" description="Loss of interaction with CXADR." evidence="5">
    <original>R</original>
    <variation>A</variation>
    <location>
        <position position="122"/>
    </location>
</feature>
<feature type="mutagenesis site" description="No effect on interaction with PI3 kinase." evidence="5">
    <original>Y</original>
    <variation>F</variation>
    <location>
        <position position="334"/>
    </location>
</feature>
<feature type="mutagenesis site" description="Loss of interaction with PI3 kinase." evidence="5">
    <original>Y</original>
    <variation>F</variation>
    <location>
        <position position="355"/>
    </location>
</feature>
<feature type="mutagenesis site" description="Loss of interaction with PI3 kinase." evidence="5">
    <original>PVWPSSP</original>
    <variation>AVWASSA</variation>
    <location>
        <begin position="360"/>
        <end position="366"/>
    </location>
</feature>
<feature type="sequence conflict" description="In Ref. 3; AAH50133." evidence="6" ref="3">
    <original>Q</original>
    <variation>R</variation>
    <location>
        <position position="231"/>
    </location>
</feature>
<feature type="strand" evidence="7">
    <location>
        <begin position="32"/>
        <end position="36"/>
    </location>
</feature>
<feature type="strand" evidence="7">
    <location>
        <begin position="41"/>
        <end position="43"/>
    </location>
</feature>
<feature type="strand" evidence="7">
    <location>
        <begin position="55"/>
        <end position="66"/>
    </location>
</feature>
<feature type="strand" evidence="7">
    <location>
        <begin position="71"/>
        <end position="77"/>
    </location>
</feature>
<feature type="strand" evidence="7">
    <location>
        <begin position="80"/>
        <end position="83"/>
    </location>
</feature>
<feature type="helix" evidence="7">
    <location>
        <begin position="85"/>
        <end position="87"/>
    </location>
</feature>
<feature type="turn" evidence="7">
    <location>
        <begin position="88"/>
        <end position="90"/>
    </location>
</feature>
<feature type="strand" evidence="7">
    <location>
        <begin position="91"/>
        <end position="93"/>
    </location>
</feature>
<feature type="turn" evidence="7">
    <location>
        <begin position="97"/>
        <end position="100"/>
    </location>
</feature>
<feature type="strand" evidence="7">
    <location>
        <begin position="104"/>
        <end position="106"/>
    </location>
</feature>
<feature type="helix" evidence="7">
    <location>
        <begin position="111"/>
        <end position="113"/>
    </location>
</feature>
<feature type="strand" evidence="7">
    <location>
        <begin position="115"/>
        <end position="123"/>
    </location>
</feature>
<feature type="strand" evidence="7">
    <location>
        <begin position="129"/>
        <end position="139"/>
    </location>
</feature>
<feature type="strand" evidence="7">
    <location>
        <begin position="144"/>
        <end position="149"/>
    </location>
</feature>
<feature type="strand" evidence="7">
    <location>
        <begin position="154"/>
        <end position="156"/>
    </location>
</feature>
<feature type="strand" evidence="7">
    <location>
        <begin position="161"/>
        <end position="166"/>
    </location>
</feature>
<feature type="strand" evidence="7">
    <location>
        <begin position="170"/>
        <end position="176"/>
    </location>
</feature>
<feature type="strand" evidence="7">
    <location>
        <begin position="184"/>
        <end position="190"/>
    </location>
</feature>
<feature type="strand" evidence="7">
    <location>
        <begin position="193"/>
        <end position="195"/>
    </location>
</feature>
<feature type="strand" evidence="7">
    <location>
        <begin position="197"/>
        <end position="199"/>
    </location>
</feature>
<feature type="turn" evidence="7">
    <location>
        <begin position="203"/>
        <end position="207"/>
    </location>
</feature>
<feature type="strand" evidence="7">
    <location>
        <begin position="208"/>
        <end position="210"/>
    </location>
</feature>
<feature type="helix" evidence="7">
    <location>
        <begin position="214"/>
        <end position="216"/>
    </location>
</feature>
<feature type="strand" evidence="7">
    <location>
        <begin position="221"/>
        <end position="223"/>
    </location>
</feature>
<feature type="helix" evidence="7">
    <location>
        <begin position="228"/>
        <end position="230"/>
    </location>
</feature>
<feature type="strand" evidence="7">
    <location>
        <begin position="232"/>
        <end position="240"/>
    </location>
</feature>
<feature type="strand" evidence="7">
    <location>
        <begin position="243"/>
        <end position="254"/>
    </location>
</feature>
<protein>
    <recommendedName>
        <fullName evidence="1">Junctional adhesion molecule-like</fullName>
    </recommendedName>
    <alternativeName>
        <fullName>Dendritic cell-specific protein CREA7</fullName>
        <shortName>mCrea7</shortName>
    </alternativeName>
</protein>
<proteinExistence type="evidence at protein level"/>
<keyword id="KW-0002">3D-structure</keyword>
<keyword id="KW-0130">Cell adhesion</keyword>
<keyword id="KW-0965">Cell junction</keyword>
<keyword id="KW-1003">Cell membrane</keyword>
<keyword id="KW-1015">Disulfide bond</keyword>
<keyword id="KW-0325">Glycoprotein</keyword>
<keyword id="KW-0391">Immunity</keyword>
<keyword id="KW-0393">Immunoglobulin domain</keyword>
<keyword id="KW-0472">Membrane</keyword>
<keyword id="KW-0597">Phosphoprotein</keyword>
<keyword id="KW-1185">Reference proteome</keyword>
<keyword id="KW-0677">Repeat</keyword>
<keyword id="KW-0732">Signal</keyword>
<keyword id="KW-0812">Transmembrane</keyword>
<keyword id="KW-1133">Transmembrane helix</keyword>
<dbReference type="EMBL" id="AY093688">
    <property type="protein sequence ID" value="AAM15732.1"/>
    <property type="molecule type" value="mRNA"/>
</dbReference>
<dbReference type="EMBL" id="AC122305">
    <property type="status" value="NOT_ANNOTATED_CDS"/>
    <property type="molecule type" value="Genomic_DNA"/>
</dbReference>
<dbReference type="EMBL" id="BC050133">
    <property type="protein sequence ID" value="AAH50133.1"/>
    <property type="molecule type" value="mRNA"/>
</dbReference>
<dbReference type="CCDS" id="CCDS23128.1"/>
<dbReference type="RefSeq" id="NP_001005421.3">
    <property type="nucleotide sequence ID" value="NM_001005421.4"/>
</dbReference>
<dbReference type="RefSeq" id="XP_006510446.1">
    <property type="nucleotide sequence ID" value="XM_006510383.5"/>
</dbReference>
<dbReference type="PDB" id="3MJ6">
    <property type="method" value="X-ray"/>
    <property type="resolution" value="2.19 A"/>
    <property type="chains" value="A=21-280"/>
</dbReference>
<dbReference type="PDB" id="3MJ7">
    <property type="method" value="X-ray"/>
    <property type="resolution" value="2.80 A"/>
    <property type="chains" value="A=21-280"/>
</dbReference>
<dbReference type="PDB" id="3MJ9">
    <property type="method" value="X-ray"/>
    <property type="resolution" value="2.95 A"/>
    <property type="chains" value="A=21-280"/>
</dbReference>
<dbReference type="PDBsum" id="3MJ6"/>
<dbReference type="PDBsum" id="3MJ7"/>
<dbReference type="PDBsum" id="3MJ9"/>
<dbReference type="SMR" id="Q80UL9"/>
<dbReference type="BioGRID" id="234770">
    <property type="interactions" value="1"/>
</dbReference>
<dbReference type="CORUM" id="Q80UL9"/>
<dbReference type="DIP" id="DIP-59107N"/>
<dbReference type="FunCoup" id="Q80UL9">
    <property type="interactions" value="73"/>
</dbReference>
<dbReference type="IntAct" id="Q80UL9">
    <property type="interactions" value="2"/>
</dbReference>
<dbReference type="MINT" id="Q80UL9"/>
<dbReference type="STRING" id="10090.ENSMUSP00000052033"/>
<dbReference type="GlyCosmos" id="Q80UL9">
    <property type="glycosylation" value="3 sites, No reported glycans"/>
</dbReference>
<dbReference type="GlyGen" id="Q80UL9">
    <property type="glycosylation" value="4 sites"/>
</dbReference>
<dbReference type="iPTMnet" id="Q80UL9"/>
<dbReference type="PhosphoSitePlus" id="Q80UL9"/>
<dbReference type="PaxDb" id="10090-ENSMUSP00000052033"/>
<dbReference type="ProteomicsDB" id="269419"/>
<dbReference type="ABCD" id="Q80UL9">
    <property type="antibodies" value="1 sequenced antibody"/>
</dbReference>
<dbReference type="DNASU" id="270152"/>
<dbReference type="Ensembl" id="ENSMUST00000050020.8">
    <property type="protein sequence ID" value="ENSMUSP00000052033.7"/>
    <property type="gene ID" value="ENSMUSG00000048534.8"/>
</dbReference>
<dbReference type="Ensembl" id="ENSMUST00000215880.2">
    <property type="protein sequence ID" value="ENSMUSP00000150697.2"/>
    <property type="gene ID" value="ENSMUSG00000048534.8"/>
</dbReference>
<dbReference type="GeneID" id="270152"/>
<dbReference type="KEGG" id="mmu:270152"/>
<dbReference type="UCSC" id="uc009pfd.2">
    <property type="organism name" value="mouse"/>
</dbReference>
<dbReference type="AGR" id="MGI:2685484"/>
<dbReference type="CTD" id="120425"/>
<dbReference type="MGI" id="MGI:2685484">
    <property type="gene designation" value="Jaml"/>
</dbReference>
<dbReference type="VEuPathDB" id="HostDB:ENSMUSG00000048534"/>
<dbReference type="eggNOG" id="ENOG502SVGE">
    <property type="taxonomic scope" value="Eukaryota"/>
</dbReference>
<dbReference type="GeneTree" id="ENSGT00440000034341"/>
<dbReference type="HOGENOM" id="CLU_059564_0_0_1"/>
<dbReference type="InParanoid" id="Q80UL9"/>
<dbReference type="OMA" id="NDGAIML"/>
<dbReference type="OrthoDB" id="10012075at2759"/>
<dbReference type="PhylomeDB" id="Q80UL9"/>
<dbReference type="TreeFam" id="TF331728"/>
<dbReference type="Reactome" id="R-MMU-198933">
    <property type="pathway name" value="Immunoregulatory interactions between a Lymphoid and a non-Lymphoid cell"/>
</dbReference>
<dbReference type="Reactome" id="R-MMU-202733">
    <property type="pathway name" value="Cell surface interactions at the vascular wall"/>
</dbReference>
<dbReference type="BioGRID-ORCS" id="270152">
    <property type="hits" value="1 hit in 77 CRISPR screens"/>
</dbReference>
<dbReference type="EvolutionaryTrace" id="Q80UL9"/>
<dbReference type="PRO" id="PR:Q80UL9"/>
<dbReference type="Proteomes" id="UP000000589">
    <property type="component" value="Chromosome 9"/>
</dbReference>
<dbReference type="RNAct" id="Q80UL9">
    <property type="molecule type" value="protein"/>
</dbReference>
<dbReference type="Bgee" id="ENSMUSG00000048534">
    <property type="expression patterns" value="Expressed in granulocyte and 44 other cell types or tissues"/>
</dbReference>
<dbReference type="ExpressionAtlas" id="Q80UL9">
    <property type="expression patterns" value="baseline and differential"/>
</dbReference>
<dbReference type="GO" id="GO:0005923">
    <property type="term" value="C:bicellular tight junction"/>
    <property type="evidence" value="ECO:0000250"/>
    <property type="project" value="UniProtKB"/>
</dbReference>
<dbReference type="GO" id="GO:0005886">
    <property type="term" value="C:plasma membrane"/>
    <property type="evidence" value="ECO:0000314"/>
    <property type="project" value="UniProtKB"/>
</dbReference>
<dbReference type="GO" id="GO:0042803">
    <property type="term" value="F:protein homodimerization activity"/>
    <property type="evidence" value="ECO:0000250"/>
    <property type="project" value="UniProtKB"/>
</dbReference>
<dbReference type="GO" id="GO:0046629">
    <property type="term" value="P:gamma-delta T cell activation"/>
    <property type="evidence" value="ECO:0000314"/>
    <property type="project" value="UniProtKB"/>
</dbReference>
<dbReference type="GO" id="GO:0007157">
    <property type="term" value="P:heterophilic cell-cell adhesion via plasma membrane cell adhesion molecules"/>
    <property type="evidence" value="ECO:0000250"/>
    <property type="project" value="UniProtKB"/>
</dbReference>
<dbReference type="GO" id="GO:0035696">
    <property type="term" value="P:monocyte extravasation"/>
    <property type="evidence" value="ECO:0000250"/>
    <property type="project" value="UniProtKB"/>
</dbReference>
<dbReference type="GO" id="GO:0060054">
    <property type="term" value="P:positive regulation of epithelial cell proliferation involved in wound healing"/>
    <property type="evidence" value="ECO:0000314"/>
    <property type="project" value="UniProtKB"/>
</dbReference>
<dbReference type="FunFam" id="2.60.40.10:FF:000736">
    <property type="entry name" value="Junctional adhesion molecule-like"/>
    <property type="match status" value="2"/>
</dbReference>
<dbReference type="Gene3D" id="2.60.40.10">
    <property type="entry name" value="Immunoglobulins"/>
    <property type="match status" value="2"/>
</dbReference>
<dbReference type="InterPro" id="IPR007110">
    <property type="entry name" value="Ig-like_dom"/>
</dbReference>
<dbReference type="InterPro" id="IPR036179">
    <property type="entry name" value="Ig-like_dom_sf"/>
</dbReference>
<dbReference type="InterPro" id="IPR013783">
    <property type="entry name" value="Ig-like_fold"/>
</dbReference>
<dbReference type="InterPro" id="IPR003599">
    <property type="entry name" value="Ig_sub"/>
</dbReference>
<dbReference type="InterPro" id="IPR003598">
    <property type="entry name" value="Ig_sub2"/>
</dbReference>
<dbReference type="InterPro" id="IPR013106">
    <property type="entry name" value="Ig_V-set"/>
</dbReference>
<dbReference type="InterPro" id="IPR000920">
    <property type="entry name" value="Myelin_P0-rel"/>
</dbReference>
<dbReference type="PANTHER" id="PTHR13869:SF22">
    <property type="entry name" value="JUNCTIONAL ADHESION MOLECULE-LIKE"/>
    <property type="match status" value="1"/>
</dbReference>
<dbReference type="PANTHER" id="PTHR13869">
    <property type="entry name" value="MYELIN P0 RELATED"/>
    <property type="match status" value="1"/>
</dbReference>
<dbReference type="Pfam" id="PF07686">
    <property type="entry name" value="V-set"/>
    <property type="match status" value="2"/>
</dbReference>
<dbReference type="SMART" id="SM00409">
    <property type="entry name" value="IG"/>
    <property type="match status" value="2"/>
</dbReference>
<dbReference type="SMART" id="SM00408">
    <property type="entry name" value="IGc2"/>
    <property type="match status" value="2"/>
</dbReference>
<dbReference type="SMART" id="SM00406">
    <property type="entry name" value="IGv"/>
    <property type="match status" value="2"/>
</dbReference>
<dbReference type="SUPFAM" id="SSF48726">
    <property type="entry name" value="Immunoglobulin"/>
    <property type="match status" value="2"/>
</dbReference>
<dbReference type="PROSITE" id="PS50835">
    <property type="entry name" value="IG_LIKE"/>
    <property type="match status" value="2"/>
</dbReference>
<sequence>MLCLLKLIVIPVILAPVGYPQGLPGLTVSSPQLRVHVGESVLMGCVVQRTEEKHVDRVDWLFSKDKDDASEYVLFYYSNLSVPTGRFQNRSHLVGDTFHNDGSLLLQDVQKADEGIYTCEIRLKNESMVMKKPVELWVLPEEPKDLRVRVGDTTQMRCSIQSTEEKRVTKVNWMFSSGSHTEEETVLSYDSNMRSGKFQSLGRFRNRVDLTGDISRNDGSIKLQTVKESDQGIYTCSIYVGKLESRKTIVLHVVQDEFQRTISPTPPTDKGQQGILNGNQLVIIVGIVCATFLLLPVLILIVKKAKWNKSSVSSMASVKSLENKEKINPEKHIYSSITTWETTERGISGESEGTYMTMNPVWPSSPKASSLVRSSVRSK</sequence>
<comment type="function">
    <text evidence="4">Transmembrane protein of the plasma membrane of leukocytes that control their migration and activation through interaction with CXADR, a plasma membrane receptor found on adjacent epithelial and endothelial cells. The interaction between both receptors mediates the activation of gamma-delta T-cells, a subpopulation of T-cells residing in epithelia and involved in tissue homeostasis and repair. Upon epithelial CXADR-binding, JAML induces downstream cell signaling events in gamma-delta T-cells through PI3-kinase and MAP kinases. It results in proliferation and production of cytokines and growth factors by T-cells that in turn stimulate epithelial tissues repair. It also controls the transmigration of leukocytes within epithelial and endothelial tissues through adhesive interactions with epithelial and endothelial CXADR.</text>
</comment>
<comment type="subunit">
    <text evidence="4 5">Homodimer; active form in leukocyte-endothelial cell adhesion. Interacts (homodimeric form) with CXADR. Interacts (via cytoplasmic domain) with the PI3 kinase; upon CXADR-binding. Interacts with ITGA4 and ITGB1; integrin alpha-4/beta-1 may regulate leukocyte to endothelial cells adhesion by controlling JAML homodimerization.</text>
</comment>
<comment type="subcellular location">
    <subcellularLocation>
        <location evidence="4">Cell membrane</location>
        <topology evidence="4">Single-pass type I membrane protein</topology>
    </subcellularLocation>
    <subcellularLocation>
        <location evidence="1">Cell junction</location>
    </subcellularLocation>
    <text evidence="1">Localized at the plasma membrane and enriched in areas of cell-cell contacts.</text>
</comment>
<comment type="tissue specificity">
    <text evidence="4">Expressed by gamma-delta intraepithelial T cells (at protein level).</text>
</comment>
<comment type="domain">
    <text evidence="4 5">The Ig-like V-type domain 1 mediates interaction with CXADR (PubMed:20813954). The Ig-like V-type domain 2 may also play a role in the interaction (PubMed:20813955).</text>
</comment>
<comment type="similarity">
    <text evidence="6">Belongs to the immunoglobulin superfamily.</text>
</comment>
<name>JAML_MOUSE</name>
<evidence type="ECO:0000250" key="1">
    <source>
        <dbReference type="UniProtKB" id="Q86YT9"/>
    </source>
</evidence>
<evidence type="ECO:0000255" key="2"/>
<evidence type="ECO:0000255" key="3">
    <source>
        <dbReference type="PROSITE-ProRule" id="PRU00114"/>
    </source>
</evidence>
<evidence type="ECO:0000269" key="4">
    <source>
    </source>
</evidence>
<evidence type="ECO:0000269" key="5">
    <source>
    </source>
</evidence>
<evidence type="ECO:0000305" key="6"/>
<evidence type="ECO:0007829" key="7">
    <source>
        <dbReference type="PDB" id="3MJ6"/>
    </source>
</evidence>